<organism>
    <name type="scientific">Oryza sativa subsp. japonica</name>
    <name type="common">Rice</name>
    <dbReference type="NCBI Taxonomy" id="39947"/>
    <lineage>
        <taxon>Eukaryota</taxon>
        <taxon>Viridiplantae</taxon>
        <taxon>Streptophyta</taxon>
        <taxon>Embryophyta</taxon>
        <taxon>Tracheophyta</taxon>
        <taxon>Spermatophyta</taxon>
        <taxon>Magnoliopsida</taxon>
        <taxon>Liliopsida</taxon>
        <taxon>Poales</taxon>
        <taxon>Poaceae</taxon>
        <taxon>BOP clade</taxon>
        <taxon>Oryzoideae</taxon>
        <taxon>Oryzeae</taxon>
        <taxon>Oryzinae</taxon>
        <taxon>Oryza</taxon>
        <taxon>Oryza sativa</taxon>
    </lineage>
</organism>
<protein>
    <recommendedName>
        <fullName>Acetyl-CoA carboxylase 2</fullName>
        <ecNumber>6.4.1.2</ecNumber>
    </recommendedName>
    <domain>
        <recommendedName>
            <fullName>Biotin carboxylase</fullName>
            <ecNumber>6.3.4.14</ecNumber>
        </recommendedName>
    </domain>
</protein>
<keyword id="KW-0021">Allosteric enzyme</keyword>
<keyword id="KW-0067">ATP-binding</keyword>
<keyword id="KW-0092">Biotin</keyword>
<keyword id="KW-0963">Cytoplasm</keyword>
<keyword id="KW-0275">Fatty acid biosynthesis</keyword>
<keyword id="KW-0276">Fatty acid metabolism</keyword>
<keyword id="KW-0436">Ligase</keyword>
<keyword id="KW-0444">Lipid biosynthesis</keyword>
<keyword id="KW-0443">Lipid metabolism</keyword>
<keyword id="KW-0460">Magnesium</keyword>
<keyword id="KW-0464">Manganese</keyword>
<keyword id="KW-0479">Metal-binding</keyword>
<keyword id="KW-0511">Multifunctional enzyme</keyword>
<keyword id="KW-0547">Nucleotide-binding</keyword>
<keyword id="KW-0597">Phosphoprotein</keyword>
<keyword id="KW-1185">Reference proteome</keyword>
<gene>
    <name type="primary">ACC2</name>
    <name type="ordered locus">Os05g0295300</name>
    <name type="ordered locus">LOC_Os05g22940</name>
    <name type="ORF">OsJ_17935</name>
</gene>
<proteinExistence type="inferred from homology"/>
<comment type="function">
    <text evidence="2">Multifunctional enzyme that catalyzes the carboxylation of acetyl-CoA, forming malonyl-CoA, which is used in the plastid for fatty acid synthesis and in the cytosol in various biosynthetic pathways including fatty acid elongation.</text>
</comment>
<comment type="catalytic activity">
    <reaction evidence="2">
        <text>hydrogencarbonate + acetyl-CoA + ATP = malonyl-CoA + ADP + phosphate + H(+)</text>
        <dbReference type="Rhea" id="RHEA:11308"/>
        <dbReference type="ChEBI" id="CHEBI:15378"/>
        <dbReference type="ChEBI" id="CHEBI:17544"/>
        <dbReference type="ChEBI" id="CHEBI:30616"/>
        <dbReference type="ChEBI" id="CHEBI:43474"/>
        <dbReference type="ChEBI" id="CHEBI:57288"/>
        <dbReference type="ChEBI" id="CHEBI:57384"/>
        <dbReference type="ChEBI" id="CHEBI:456216"/>
        <dbReference type="EC" id="6.4.1.2"/>
    </reaction>
</comment>
<comment type="catalytic activity">
    <reaction evidence="2">
        <text>N(6)-biotinyl-L-lysyl-[protein] + hydrogencarbonate + ATP = N(6)-carboxybiotinyl-L-lysyl-[protein] + ADP + phosphate + H(+)</text>
        <dbReference type="Rhea" id="RHEA:13501"/>
        <dbReference type="Rhea" id="RHEA-COMP:10505"/>
        <dbReference type="Rhea" id="RHEA-COMP:10506"/>
        <dbReference type="ChEBI" id="CHEBI:15378"/>
        <dbReference type="ChEBI" id="CHEBI:17544"/>
        <dbReference type="ChEBI" id="CHEBI:30616"/>
        <dbReference type="ChEBI" id="CHEBI:43474"/>
        <dbReference type="ChEBI" id="CHEBI:83144"/>
        <dbReference type="ChEBI" id="CHEBI:83145"/>
        <dbReference type="ChEBI" id="CHEBI:456216"/>
        <dbReference type="EC" id="6.3.4.14"/>
    </reaction>
</comment>
<comment type="cofactor">
    <cofactor evidence="5">
        <name>biotin</name>
        <dbReference type="ChEBI" id="CHEBI:57586"/>
    </cofactor>
</comment>
<comment type="cofactor">
    <cofactor evidence="3 4">
        <name>Mg(2+)</name>
        <dbReference type="ChEBI" id="CHEBI:18420"/>
    </cofactor>
    <cofactor evidence="3 4">
        <name>Mn(2+)</name>
        <dbReference type="ChEBI" id="CHEBI:29035"/>
    </cofactor>
    <text evidence="3 4">Binds 2 magnesium or manganese ions per subunit.</text>
</comment>
<comment type="pathway">
    <text>Lipid metabolism; malonyl-CoA biosynthesis; malonyl-CoA from acetyl-CoA: step 1/1.</text>
</comment>
<comment type="subunit">
    <text evidence="10">Homodimer.</text>
</comment>
<comment type="subcellular location">
    <subcellularLocation>
        <location evidence="10">Cytoplasm</location>
        <location evidence="10">Cytosol</location>
    </subcellularLocation>
</comment>
<comment type="sequence caution" evidence="10">
    <conflict type="erroneous gene model prediction">
        <sequence resource="EMBL-CDS" id="BAF17025"/>
    </conflict>
</comment>
<comment type="sequence caution" evidence="10">
    <conflict type="erroneous gene model prediction">
        <sequence resource="EMBL-CDS" id="EEE63127"/>
    </conflict>
</comment>
<accession>B9FK36</accession>
<accession>Q0DJE8</accession>
<reference key="1">
    <citation type="journal article" date="2005" name="Nature">
        <title>The map-based sequence of the rice genome.</title>
        <authorList>
            <consortium name="International rice genome sequencing project (IRGSP)"/>
        </authorList>
    </citation>
    <scope>NUCLEOTIDE SEQUENCE [LARGE SCALE GENOMIC DNA]</scope>
    <source>
        <strain>cv. Nipponbare</strain>
    </source>
</reference>
<reference key="2">
    <citation type="journal article" date="2008" name="Nucleic Acids Res.">
        <title>The rice annotation project database (RAP-DB): 2008 update.</title>
        <authorList>
            <consortium name="The rice annotation project (RAP)"/>
        </authorList>
    </citation>
    <scope>GENOME REANNOTATION</scope>
    <source>
        <strain>cv. Nipponbare</strain>
    </source>
</reference>
<reference key="3">
    <citation type="journal article" date="2013" name="Rice">
        <title>Improvement of the Oryza sativa Nipponbare reference genome using next generation sequence and optical map data.</title>
        <authorList>
            <person name="Kawahara Y."/>
            <person name="de la Bastide M."/>
            <person name="Hamilton J.P."/>
            <person name="Kanamori H."/>
            <person name="McCombie W.R."/>
            <person name="Ouyang S."/>
            <person name="Schwartz D.C."/>
            <person name="Tanaka T."/>
            <person name="Wu J."/>
            <person name="Zhou S."/>
            <person name="Childs K.L."/>
            <person name="Davidson R.M."/>
            <person name="Lin H."/>
            <person name="Quesada-Ocampo L."/>
            <person name="Vaillancourt B."/>
            <person name="Sakai H."/>
            <person name="Lee S.S."/>
            <person name="Kim J."/>
            <person name="Numa H."/>
            <person name="Itoh T."/>
            <person name="Buell C.R."/>
            <person name="Matsumoto T."/>
        </authorList>
    </citation>
    <scope>GENOME REANNOTATION</scope>
    <source>
        <strain>cv. Nipponbare</strain>
    </source>
</reference>
<reference key="4">
    <citation type="journal article" date="2005" name="PLoS Biol.">
        <title>The genomes of Oryza sativa: a history of duplications.</title>
        <authorList>
            <person name="Yu J."/>
            <person name="Wang J."/>
            <person name="Lin W."/>
            <person name="Li S."/>
            <person name="Li H."/>
            <person name="Zhou J."/>
            <person name="Ni P."/>
            <person name="Dong W."/>
            <person name="Hu S."/>
            <person name="Zeng C."/>
            <person name="Zhang J."/>
            <person name="Zhang Y."/>
            <person name="Li R."/>
            <person name="Xu Z."/>
            <person name="Li S."/>
            <person name="Li X."/>
            <person name="Zheng H."/>
            <person name="Cong L."/>
            <person name="Lin L."/>
            <person name="Yin J."/>
            <person name="Geng J."/>
            <person name="Li G."/>
            <person name="Shi J."/>
            <person name="Liu J."/>
            <person name="Lv H."/>
            <person name="Li J."/>
            <person name="Wang J."/>
            <person name="Deng Y."/>
            <person name="Ran L."/>
            <person name="Shi X."/>
            <person name="Wang X."/>
            <person name="Wu Q."/>
            <person name="Li C."/>
            <person name="Ren X."/>
            <person name="Wang J."/>
            <person name="Wang X."/>
            <person name="Li D."/>
            <person name="Liu D."/>
            <person name="Zhang X."/>
            <person name="Ji Z."/>
            <person name="Zhao W."/>
            <person name="Sun Y."/>
            <person name="Zhang Z."/>
            <person name="Bao J."/>
            <person name="Han Y."/>
            <person name="Dong L."/>
            <person name="Ji J."/>
            <person name="Chen P."/>
            <person name="Wu S."/>
            <person name="Liu J."/>
            <person name="Xiao Y."/>
            <person name="Bu D."/>
            <person name="Tan J."/>
            <person name="Yang L."/>
            <person name="Ye C."/>
            <person name="Zhang J."/>
            <person name="Xu J."/>
            <person name="Zhou Y."/>
            <person name="Yu Y."/>
            <person name="Zhang B."/>
            <person name="Zhuang S."/>
            <person name="Wei H."/>
            <person name="Liu B."/>
            <person name="Lei M."/>
            <person name="Yu H."/>
            <person name="Li Y."/>
            <person name="Xu H."/>
            <person name="Wei S."/>
            <person name="He X."/>
            <person name="Fang L."/>
            <person name="Zhang Z."/>
            <person name="Zhang Y."/>
            <person name="Huang X."/>
            <person name="Su Z."/>
            <person name="Tong W."/>
            <person name="Li J."/>
            <person name="Tong Z."/>
            <person name="Li S."/>
            <person name="Ye J."/>
            <person name="Wang L."/>
            <person name="Fang L."/>
            <person name="Lei T."/>
            <person name="Chen C.-S."/>
            <person name="Chen H.-C."/>
            <person name="Xu Z."/>
            <person name="Li H."/>
            <person name="Huang H."/>
            <person name="Zhang F."/>
            <person name="Xu H."/>
            <person name="Li N."/>
            <person name="Zhao C."/>
            <person name="Li S."/>
            <person name="Dong L."/>
            <person name="Huang Y."/>
            <person name="Li L."/>
            <person name="Xi Y."/>
            <person name="Qi Q."/>
            <person name="Li W."/>
            <person name="Zhang B."/>
            <person name="Hu W."/>
            <person name="Zhang Y."/>
            <person name="Tian X."/>
            <person name="Jiao Y."/>
            <person name="Liang X."/>
            <person name="Jin J."/>
            <person name="Gao L."/>
            <person name="Zheng W."/>
            <person name="Hao B."/>
            <person name="Liu S.-M."/>
            <person name="Wang W."/>
            <person name="Yuan L."/>
            <person name="Cao M."/>
            <person name="McDermott J."/>
            <person name="Samudrala R."/>
            <person name="Wang J."/>
            <person name="Wong G.K.-S."/>
            <person name="Yang H."/>
        </authorList>
    </citation>
    <scope>NUCLEOTIDE SEQUENCE [LARGE SCALE GENOMIC DNA]</scope>
    <source>
        <strain>cv. Nipponbare</strain>
    </source>
</reference>
<name>ACC2_ORYSJ</name>
<feature type="chain" id="PRO_0000412214" description="Acetyl-CoA carboxylase 2">
    <location>
        <begin position="1"/>
        <end position="2327"/>
    </location>
</feature>
<feature type="domain" description="Biotin carboxylation">
    <location>
        <begin position="134"/>
        <end position="641"/>
    </location>
</feature>
<feature type="domain" description="ATP-grasp" evidence="3">
    <location>
        <begin position="287"/>
        <end position="481"/>
    </location>
</feature>
<feature type="domain" description="Biotinyl-binding" evidence="5">
    <location>
        <begin position="768"/>
        <end position="842"/>
    </location>
</feature>
<feature type="domain" description="CoA carboxyltransferase N-terminal" evidence="6">
    <location>
        <begin position="1568"/>
        <end position="1909"/>
    </location>
</feature>
<feature type="domain" description="CoA carboxyltransferase C-terminal" evidence="7">
    <location>
        <begin position="1913"/>
        <end position="2227"/>
    </location>
</feature>
<feature type="region of interest" description="Disordered" evidence="9">
    <location>
        <begin position="1"/>
        <end position="62"/>
    </location>
</feature>
<feature type="region of interest" description="Carboxyltransferase" evidence="8">
    <location>
        <begin position="1568"/>
        <end position="2227"/>
    </location>
</feature>
<feature type="active site" evidence="1">
    <location>
        <position position="454"/>
    </location>
</feature>
<feature type="binding site" evidence="3">
    <location>
        <begin position="313"/>
        <end position="370"/>
    </location>
    <ligand>
        <name>ATP</name>
        <dbReference type="ChEBI" id="CHEBI:30616"/>
    </ligand>
</feature>
<feature type="binding site" evidence="3 4">
    <location>
        <position position="436"/>
    </location>
    <ligand>
        <name>Mg(2+)</name>
        <dbReference type="ChEBI" id="CHEBI:18420"/>
        <label>1</label>
    </ligand>
</feature>
<feature type="binding site" evidence="3 4">
    <location>
        <position position="436"/>
    </location>
    <ligand>
        <name>Mn(2+)</name>
        <dbReference type="ChEBI" id="CHEBI:29035"/>
        <label>1</label>
    </ligand>
</feature>
<feature type="binding site" evidence="3 4">
    <location>
        <position position="450"/>
    </location>
    <ligand>
        <name>Mg(2+)</name>
        <dbReference type="ChEBI" id="CHEBI:18420"/>
        <label>1</label>
    </ligand>
</feature>
<feature type="binding site" evidence="3 4">
    <location>
        <position position="450"/>
    </location>
    <ligand>
        <name>Mg(2+)</name>
        <dbReference type="ChEBI" id="CHEBI:18420"/>
        <label>2</label>
    </ligand>
</feature>
<feature type="binding site" evidence="3 4">
    <location>
        <position position="450"/>
    </location>
    <ligand>
        <name>Mn(2+)</name>
        <dbReference type="ChEBI" id="CHEBI:29035"/>
        <label>1</label>
    </ligand>
</feature>
<feature type="binding site" evidence="3 4">
    <location>
        <position position="450"/>
    </location>
    <ligand>
        <name>Mn(2+)</name>
        <dbReference type="ChEBI" id="CHEBI:29035"/>
        <label>2</label>
    </ligand>
</feature>
<feature type="binding site" evidence="3 4">
    <location>
        <position position="452"/>
    </location>
    <ligand>
        <name>Mg(2+)</name>
        <dbReference type="ChEBI" id="CHEBI:18420"/>
        <label>2</label>
    </ligand>
</feature>
<feature type="binding site" evidence="3 4">
    <location>
        <position position="452"/>
    </location>
    <ligand>
        <name>Mn(2+)</name>
        <dbReference type="ChEBI" id="CHEBI:29035"/>
        <label>2</label>
    </ligand>
</feature>
<feature type="binding site" evidence="1">
    <location>
        <position position="1818"/>
    </location>
    <ligand>
        <name>CoA</name>
        <dbReference type="ChEBI" id="CHEBI:57287"/>
    </ligand>
</feature>
<feature type="binding site" evidence="1">
    <location>
        <position position="2119"/>
    </location>
    <ligand>
        <name>CoA</name>
        <dbReference type="ChEBI" id="CHEBI:57287"/>
    </ligand>
</feature>
<feature type="binding site" evidence="1">
    <location>
        <position position="2121"/>
    </location>
    <ligand>
        <name>CoA</name>
        <dbReference type="ChEBI" id="CHEBI:57287"/>
    </ligand>
</feature>
<feature type="modified residue" description="N6-biotinyllysine" evidence="5">
    <location>
        <position position="809"/>
    </location>
</feature>
<dbReference type="EC" id="6.4.1.2"/>
<dbReference type="EC" id="6.3.4.14"/>
<dbReference type="EMBL" id="AP008211">
    <property type="protein sequence ID" value="BAF17025.1"/>
    <property type="status" value="ALT_SEQ"/>
    <property type="molecule type" value="Genomic_DNA"/>
</dbReference>
<dbReference type="EMBL" id="AP014961">
    <property type="status" value="NOT_ANNOTATED_CDS"/>
    <property type="molecule type" value="Genomic_DNA"/>
</dbReference>
<dbReference type="EMBL" id="CM000142">
    <property type="protein sequence ID" value="EEE63127.1"/>
    <property type="status" value="ALT_SEQ"/>
    <property type="molecule type" value="Genomic_DNA"/>
</dbReference>
<dbReference type="RefSeq" id="XP_015639213.1">
    <property type="nucleotide sequence ID" value="XM_015783727.1"/>
</dbReference>
<dbReference type="SMR" id="B9FK36"/>
<dbReference type="FunCoup" id="B9FK36">
    <property type="interactions" value="1334"/>
</dbReference>
<dbReference type="STRING" id="39947.B9FK36"/>
<dbReference type="PaxDb" id="39947-B9FK36"/>
<dbReference type="EnsemblPlants" id="Os05t0295300-01">
    <property type="protein sequence ID" value="Os05t0295300-01"/>
    <property type="gene ID" value="Os05g0295300"/>
</dbReference>
<dbReference type="Gramene" id="Os05t0295300-01">
    <property type="protein sequence ID" value="Os05t0295300-01"/>
    <property type="gene ID" value="Os05g0295300"/>
</dbReference>
<dbReference type="KEGG" id="dosa:Os05g0295300"/>
<dbReference type="eggNOG" id="KOG0368">
    <property type="taxonomic scope" value="Eukaryota"/>
</dbReference>
<dbReference type="HOGENOM" id="CLU_004031_1_0_1"/>
<dbReference type="InParanoid" id="B9FK36"/>
<dbReference type="OrthoDB" id="196847at2759"/>
<dbReference type="UniPathway" id="UPA00655">
    <property type="reaction ID" value="UER00711"/>
</dbReference>
<dbReference type="Proteomes" id="UP000000763">
    <property type="component" value="Chromosome 5"/>
</dbReference>
<dbReference type="Proteomes" id="UP000007752">
    <property type="component" value="Chromosome 5"/>
</dbReference>
<dbReference type="Proteomes" id="UP000059680">
    <property type="component" value="Chromosome 5"/>
</dbReference>
<dbReference type="GO" id="GO:0005829">
    <property type="term" value="C:cytosol"/>
    <property type="evidence" value="ECO:0007669"/>
    <property type="project" value="UniProtKB-SubCell"/>
</dbReference>
<dbReference type="GO" id="GO:0003989">
    <property type="term" value="F:acetyl-CoA carboxylase activity"/>
    <property type="evidence" value="ECO:0000318"/>
    <property type="project" value="GO_Central"/>
</dbReference>
<dbReference type="GO" id="GO:0005524">
    <property type="term" value="F:ATP binding"/>
    <property type="evidence" value="ECO:0007669"/>
    <property type="project" value="UniProtKB-KW"/>
</dbReference>
<dbReference type="GO" id="GO:0004075">
    <property type="term" value="F:biotin carboxylase activity"/>
    <property type="evidence" value="ECO:0007669"/>
    <property type="project" value="UniProtKB-EC"/>
</dbReference>
<dbReference type="GO" id="GO:0046872">
    <property type="term" value="F:metal ion binding"/>
    <property type="evidence" value="ECO:0007669"/>
    <property type="project" value="UniProtKB-KW"/>
</dbReference>
<dbReference type="GO" id="GO:0006633">
    <property type="term" value="P:fatty acid biosynthetic process"/>
    <property type="evidence" value="ECO:0000318"/>
    <property type="project" value="GO_Central"/>
</dbReference>
<dbReference type="GO" id="GO:2001295">
    <property type="term" value="P:malonyl-CoA biosynthetic process"/>
    <property type="evidence" value="ECO:0007669"/>
    <property type="project" value="UniProtKB-UniPathway"/>
</dbReference>
<dbReference type="CDD" id="cd06850">
    <property type="entry name" value="biotinyl_domain"/>
    <property type="match status" value="1"/>
</dbReference>
<dbReference type="FunFam" id="2.40.50.100:FF:000005">
    <property type="entry name" value="Acetyl-CoA carboxylase 1"/>
    <property type="match status" value="1"/>
</dbReference>
<dbReference type="FunFam" id="3.30.470.20:FF:000043">
    <property type="entry name" value="acetyl-CoA carboxylase 1-like"/>
    <property type="match status" value="1"/>
</dbReference>
<dbReference type="FunFam" id="3.30.1490.20:FF:000003">
    <property type="entry name" value="acetyl-CoA carboxylase isoform X1"/>
    <property type="match status" value="1"/>
</dbReference>
<dbReference type="FunFam" id="3.40.50.20:FF:000005">
    <property type="entry name" value="acetyl-CoA carboxylase isoform X2"/>
    <property type="match status" value="1"/>
</dbReference>
<dbReference type="FunFam" id="3.90.226.10:FF:000010">
    <property type="entry name" value="acetyl-CoA carboxylase isoform X2"/>
    <property type="match status" value="1"/>
</dbReference>
<dbReference type="Gene3D" id="2.40.50.100">
    <property type="match status" value="1"/>
</dbReference>
<dbReference type="Gene3D" id="3.40.50.20">
    <property type="match status" value="1"/>
</dbReference>
<dbReference type="Gene3D" id="3.90.226.10">
    <property type="entry name" value="2-enoyl-CoA Hydratase, Chain A, domain 1"/>
    <property type="match status" value="2"/>
</dbReference>
<dbReference type="Gene3D" id="3.30.1490.20">
    <property type="entry name" value="ATP-grasp fold, A domain"/>
    <property type="match status" value="1"/>
</dbReference>
<dbReference type="Gene3D" id="3.30.470.20">
    <property type="entry name" value="ATP-grasp fold, B domain"/>
    <property type="match status" value="1"/>
</dbReference>
<dbReference type="Gene3D" id="2.40.460.10">
    <property type="entry name" value="Biotin dependent carboxylase carboxyltransferase"/>
    <property type="match status" value="1"/>
</dbReference>
<dbReference type="Gene3D" id="3.90.1770.10">
    <property type="entry name" value="PreATP-grasp domain"/>
    <property type="match status" value="1"/>
</dbReference>
<dbReference type="InterPro" id="IPR049076">
    <property type="entry name" value="ACCA"/>
</dbReference>
<dbReference type="InterPro" id="IPR049074">
    <property type="entry name" value="ACCA_BT"/>
</dbReference>
<dbReference type="InterPro" id="IPR034733">
    <property type="entry name" value="AcCoA_carboxyl_beta"/>
</dbReference>
<dbReference type="InterPro" id="IPR013537">
    <property type="entry name" value="AcCoA_COase_cen"/>
</dbReference>
<dbReference type="InterPro" id="IPR011761">
    <property type="entry name" value="ATP-grasp"/>
</dbReference>
<dbReference type="InterPro" id="IPR013815">
    <property type="entry name" value="ATP_grasp_subdomain_1"/>
</dbReference>
<dbReference type="InterPro" id="IPR005481">
    <property type="entry name" value="BC-like_N"/>
</dbReference>
<dbReference type="InterPro" id="IPR011764">
    <property type="entry name" value="Biotin_carboxylation_dom"/>
</dbReference>
<dbReference type="InterPro" id="IPR005482">
    <property type="entry name" value="Biotin_COase_C"/>
</dbReference>
<dbReference type="InterPro" id="IPR000089">
    <property type="entry name" value="Biotin_lipoyl"/>
</dbReference>
<dbReference type="InterPro" id="IPR005479">
    <property type="entry name" value="CbamoylP_synth_lsu-like_ATP-bd"/>
</dbReference>
<dbReference type="InterPro" id="IPR029045">
    <property type="entry name" value="ClpP/crotonase-like_dom_sf"/>
</dbReference>
<dbReference type="InterPro" id="IPR011763">
    <property type="entry name" value="COA_CT_C"/>
</dbReference>
<dbReference type="InterPro" id="IPR011762">
    <property type="entry name" value="COA_CT_N"/>
</dbReference>
<dbReference type="InterPro" id="IPR016185">
    <property type="entry name" value="PreATP-grasp_dom_sf"/>
</dbReference>
<dbReference type="InterPro" id="IPR011054">
    <property type="entry name" value="Rudment_hybrid_motif"/>
</dbReference>
<dbReference type="InterPro" id="IPR011053">
    <property type="entry name" value="Single_hybrid_motif"/>
</dbReference>
<dbReference type="PANTHER" id="PTHR45728:SF4">
    <property type="entry name" value="ACETYL-COA CARBOXYLASE 2"/>
    <property type="match status" value="1"/>
</dbReference>
<dbReference type="PANTHER" id="PTHR45728">
    <property type="entry name" value="ACETYL-COA CARBOXYLASE, ISOFORM A"/>
    <property type="match status" value="1"/>
</dbReference>
<dbReference type="Pfam" id="PF08326">
    <property type="entry name" value="ACC_central"/>
    <property type="match status" value="1"/>
</dbReference>
<dbReference type="Pfam" id="PF21385">
    <property type="entry name" value="ACCA_BT"/>
    <property type="match status" value="1"/>
</dbReference>
<dbReference type="Pfam" id="PF02785">
    <property type="entry name" value="Biotin_carb_C"/>
    <property type="match status" value="1"/>
</dbReference>
<dbReference type="Pfam" id="PF00289">
    <property type="entry name" value="Biotin_carb_N"/>
    <property type="match status" value="1"/>
</dbReference>
<dbReference type="Pfam" id="PF00364">
    <property type="entry name" value="Biotin_lipoyl"/>
    <property type="match status" value="1"/>
</dbReference>
<dbReference type="Pfam" id="PF01039">
    <property type="entry name" value="Carboxyl_trans"/>
    <property type="match status" value="1"/>
</dbReference>
<dbReference type="Pfam" id="PF02786">
    <property type="entry name" value="CPSase_L_D2"/>
    <property type="match status" value="1"/>
</dbReference>
<dbReference type="SMART" id="SM00878">
    <property type="entry name" value="Biotin_carb_C"/>
    <property type="match status" value="1"/>
</dbReference>
<dbReference type="SUPFAM" id="SSF52096">
    <property type="entry name" value="ClpP/crotonase"/>
    <property type="match status" value="2"/>
</dbReference>
<dbReference type="SUPFAM" id="SSF56059">
    <property type="entry name" value="Glutathione synthetase ATP-binding domain-like"/>
    <property type="match status" value="1"/>
</dbReference>
<dbReference type="SUPFAM" id="SSF52440">
    <property type="entry name" value="PreATP-grasp domain"/>
    <property type="match status" value="1"/>
</dbReference>
<dbReference type="SUPFAM" id="SSF51246">
    <property type="entry name" value="Rudiment single hybrid motif"/>
    <property type="match status" value="1"/>
</dbReference>
<dbReference type="SUPFAM" id="SSF51230">
    <property type="entry name" value="Single hybrid motif"/>
    <property type="match status" value="1"/>
</dbReference>
<dbReference type="PROSITE" id="PS50975">
    <property type="entry name" value="ATP_GRASP"/>
    <property type="match status" value="1"/>
</dbReference>
<dbReference type="PROSITE" id="PS50979">
    <property type="entry name" value="BC"/>
    <property type="match status" value="1"/>
</dbReference>
<dbReference type="PROSITE" id="PS50968">
    <property type="entry name" value="BIOTINYL_LIPOYL"/>
    <property type="match status" value="1"/>
</dbReference>
<dbReference type="PROSITE" id="PS50989">
    <property type="entry name" value="COA_CT_CTER"/>
    <property type="match status" value="1"/>
</dbReference>
<dbReference type="PROSITE" id="PS50980">
    <property type="entry name" value="COA_CT_NTER"/>
    <property type="match status" value="1"/>
</dbReference>
<dbReference type="PROSITE" id="PS00867">
    <property type="entry name" value="CPSASE_2"/>
    <property type="match status" value="1"/>
</dbReference>
<evidence type="ECO:0000250" key="1"/>
<evidence type="ECO:0000250" key="2">
    <source>
        <dbReference type="UniProtKB" id="O04983"/>
    </source>
</evidence>
<evidence type="ECO:0000255" key="3">
    <source>
        <dbReference type="PROSITE-ProRule" id="PRU00409"/>
    </source>
</evidence>
<evidence type="ECO:0000255" key="4">
    <source>
        <dbReference type="PROSITE-ProRule" id="PRU00969"/>
    </source>
</evidence>
<evidence type="ECO:0000255" key="5">
    <source>
        <dbReference type="PROSITE-ProRule" id="PRU01066"/>
    </source>
</evidence>
<evidence type="ECO:0000255" key="6">
    <source>
        <dbReference type="PROSITE-ProRule" id="PRU01136"/>
    </source>
</evidence>
<evidence type="ECO:0000255" key="7">
    <source>
        <dbReference type="PROSITE-ProRule" id="PRU01137"/>
    </source>
</evidence>
<evidence type="ECO:0000255" key="8">
    <source>
        <dbReference type="PROSITE-ProRule" id="PRU01138"/>
    </source>
</evidence>
<evidence type="ECO:0000256" key="9">
    <source>
        <dbReference type="SAM" id="MobiDB-lite"/>
    </source>
</evidence>
<evidence type="ECO:0000305" key="10"/>
<sequence length="2327" mass="257716">MTSTHVATLGVGAQAPPRHQKKSAGTAFVSSGSSRPSYRKNGQRTRSLREESNGGVSDSKKLNHSIRQGLAGIIDLPNDAASEVDISHGSEDPRGPTVPGSYQMNGIINETHNGRHASVSKVVEFCTALGGKTPIHSVLVANNGMAAAKFMRSVRTWANDTFGSEKAIQLIAMATPEDLRINAEHIRIADQFVEVPGGTNNNNYANVQLIVEIAERTGVSAVWPGWGHASENPELPDALTAKGIVFLGPPASSMHALGDKVGSALIAQAAGVPTLAWSGSHVEVPLECCLDSIPDEMYRKACVTTTEEAVASCQVVGYPAMIKASWGGGGKGIRKVHNDDEVRTLFKQVQGEVPGSPIFIMRLAAQSRHLEVQLLCDQYGNVAALHSRDCSVQRRHQKIIEEGPVTVAPRETVKELEQAARRLAKAVGYVGAATVEYLYSMETGEYYFLELNPRLQVEHPVTEWIAEVNLPAAQVAVGMGIPLWQIPEIRRFYGMNHGGGYDLWRKTAALATPFNFDEVDSKWPKGHCVAVRITSEDPDDGFKPTGGKVKEISFKSKPNVWAYFSVKSGGGIHEFADSQFGHVFAYGTTRSAAITTMALALKEVQIRGEIHSNVDYTVDLLNASDFRENKIHTGWLDTRIAMRVQAERPPWYISVVGGALYKTVTANTATVSDYVGYLTKGQIPPKHISLVYTTVALNIDGKKYTIDTVRSGHGSYRLRMNGSTVDANVQILCDGGLLMQLDGNSHVIYAEEEASGTRLLIDGKTCMLQNDHDPSKLLAETPCKLLRFLVADGAHVDADVPYAEVEVMKMCMPLLSPASGVIHVVMSEGQAMQAGDLIARLDLDDPSAVKRAEPFEDTFPQMGLPIAASGQVHKLCAASLNACRMILAGYEHDIDKVVPELVYCLDTPELPFLQWEELMSVLATRLPRNLKSELEGKYEEYKVKFDSGIINDFPANMLRVIIEENLACGSEKEKATNERLVEPLMSLLKSYEGGRESHAHFVVKSLFEEYLYVEELFSDGIQSDVIERLRLQHSKDLQKVVDIVLSHQSVRNKTKLILKLMESLVYPNPAAYRDQLIRFSSLNHKAYYKLALKASELLEQTKLSELRARIARSLSELEMFTEESKGLSMHKREIAIKESMEDLVTAPLPVEDALISLFDCSDTTVQQRVIETYIARLYQPHLVKDSIKMKWIESGVIALWEFPEGHFDARNGGAVLGDKRWGAMVIVKSLESLSMAIRFALKETSHYTSSEGNMMHIALLGADNKMHIIQESGDDADRIAKLPLILKDNVTDLHASGVKTISFIVQRDEARMTMRRTFLWSDEKLSYEEEPILRHVEPPLSALLELDKLKVKGYNEMKYTPSRDRQWHIYTLRNTENPKMLHRVFFRTLVRQPSVSNKFSSGQIGDMEVGSAEEPLSFTSTSILRSLMTAIEELELHAIRTGHSHMYLHVLKEQKLLDLVPVSGNTVLDVGQDEATAYSLLKEMAMKIHELVGARMHHLSVCQWEVKLKLDCDGPASGTWRIVTTNVTSHTCTVDIYREMEDKESRKLVYHPATPAAGPLHGVALNNPYQPLSVIDLKRCSARNNRTTYCYDFPLAFETAVRKSWSSSTSGASKGVENAQCYVKATELVFADKHGSWGTPLVQMDRPAGLNDIGMVAWTLKMSTPEFPSGREIIVVANDITFRAGSFGPREDAFFEAVTNLACEKKLPLIYLAANSGARIGIADEVKSCFRVGWSDDGSPERGFQYIYLSEEDYARIGTSVIAHKMQLDSGEIRWVIDSVVGKEDGLGVENIHGSAAIASAYSRAYKETFTLTFVTGRTVGIGAYLARLGIRCIQRLDQPIILTGYSALNKLLGREVYSSHMQLGGPKIMATNGVVHLTVSDDLEGVSNILRWLSYVPAYIGGPLPVTTPLDPPDRPVAYIPENSCDPRAAIRGVDDSQGKWLGGMFDKDSFVETFEGWAKTVVTGRAKLGGIPVGVIAVETQTMMQTIPADPGQLDSREQSVPRAGQVWFPDSATKTAQALLDFNREGLPLFILANWRGFSGGQRDLFEGILQAGSTIVENLRTYNQPAFVYIPMAAELRGGAWVVVDSKINPDRIECYAERTAKGNVLEPQGLIEIKFRSEELQDCMSRLDPTLIDLKAKLEVANKNGSADTKSLQENIEARTKQLMPLYTQIAIRFAELHDTSLRMAAKGVIKKVVDWEESRSFFYKRLRRRISEDVLAKEIRAVAGEQFSHQPAIELIKKWYSASHAAEWDDDDAFVAWMDNPENYKDYIQYLKAQRVSQSLSSLSDSSSDLQALPQGLSMLLDKMDPSRRAQLVEEIRKVLG</sequence>